<keyword id="KW-0067">ATP-binding</keyword>
<keyword id="KW-0131">Cell cycle</keyword>
<keyword id="KW-0132">Cell division</keyword>
<keyword id="KW-0227">DNA damage</keyword>
<keyword id="KW-0233">DNA recombination</keyword>
<keyword id="KW-0234">DNA repair</keyword>
<keyword id="KW-0235">DNA replication</keyword>
<keyword id="KW-0436">Ligase</keyword>
<keyword id="KW-0460">Magnesium</keyword>
<keyword id="KW-0479">Metal-binding</keyword>
<keyword id="KW-0547">Nucleotide-binding</keyword>
<keyword id="KW-1185">Reference proteome</keyword>
<proteinExistence type="inferred from homology"/>
<dbReference type="EC" id="6.5.1.1" evidence="1"/>
<dbReference type="EMBL" id="AE016958">
    <property type="protein sequence ID" value="AAS05665.1"/>
    <property type="molecule type" value="Genomic_DNA"/>
</dbReference>
<dbReference type="SMR" id="Q73V97"/>
<dbReference type="STRING" id="262316.MAP_3117"/>
<dbReference type="KEGG" id="mpa:MAP_3117"/>
<dbReference type="eggNOG" id="COG1793">
    <property type="taxonomic scope" value="Bacteria"/>
</dbReference>
<dbReference type="HOGENOM" id="CLU_005138_6_1_11"/>
<dbReference type="Proteomes" id="UP000000580">
    <property type="component" value="Chromosome"/>
</dbReference>
<dbReference type="GO" id="GO:0005524">
    <property type="term" value="F:ATP binding"/>
    <property type="evidence" value="ECO:0007669"/>
    <property type="project" value="UniProtKB-UniRule"/>
</dbReference>
<dbReference type="GO" id="GO:0003677">
    <property type="term" value="F:DNA binding"/>
    <property type="evidence" value="ECO:0007669"/>
    <property type="project" value="InterPro"/>
</dbReference>
<dbReference type="GO" id="GO:0003910">
    <property type="term" value="F:DNA ligase (ATP) activity"/>
    <property type="evidence" value="ECO:0007669"/>
    <property type="project" value="UniProtKB-UniRule"/>
</dbReference>
<dbReference type="GO" id="GO:0046872">
    <property type="term" value="F:metal ion binding"/>
    <property type="evidence" value="ECO:0007669"/>
    <property type="project" value="UniProtKB-KW"/>
</dbReference>
<dbReference type="GO" id="GO:0051301">
    <property type="term" value="P:cell division"/>
    <property type="evidence" value="ECO:0007669"/>
    <property type="project" value="UniProtKB-KW"/>
</dbReference>
<dbReference type="GO" id="GO:0071897">
    <property type="term" value="P:DNA biosynthetic process"/>
    <property type="evidence" value="ECO:0007669"/>
    <property type="project" value="InterPro"/>
</dbReference>
<dbReference type="GO" id="GO:0006310">
    <property type="term" value="P:DNA recombination"/>
    <property type="evidence" value="ECO:0007669"/>
    <property type="project" value="UniProtKB-UniRule"/>
</dbReference>
<dbReference type="GO" id="GO:0006281">
    <property type="term" value="P:DNA repair"/>
    <property type="evidence" value="ECO:0007669"/>
    <property type="project" value="UniProtKB-UniRule"/>
</dbReference>
<dbReference type="GO" id="GO:0006260">
    <property type="term" value="P:DNA replication"/>
    <property type="evidence" value="ECO:0007669"/>
    <property type="project" value="UniProtKB-UniRule"/>
</dbReference>
<dbReference type="CDD" id="cd07901">
    <property type="entry name" value="Adenylation_DNA_ligase_Arch_LigB"/>
    <property type="match status" value="1"/>
</dbReference>
<dbReference type="CDD" id="cd07972">
    <property type="entry name" value="OBF_DNA_ligase_Arch_LigB"/>
    <property type="match status" value="1"/>
</dbReference>
<dbReference type="FunFam" id="2.40.50.140:FF:000163">
    <property type="entry name" value="Probable DNA ligase"/>
    <property type="match status" value="1"/>
</dbReference>
<dbReference type="FunFam" id="3.30.470.30:FF:000012">
    <property type="entry name" value="Probable DNA ligase"/>
    <property type="match status" value="1"/>
</dbReference>
<dbReference type="Gene3D" id="1.10.3260.10">
    <property type="entry name" value="DNA ligase, ATP-dependent, N-terminal domain"/>
    <property type="match status" value="1"/>
</dbReference>
<dbReference type="Gene3D" id="3.30.470.30">
    <property type="entry name" value="DNA ligase/mRNA capping enzyme"/>
    <property type="match status" value="1"/>
</dbReference>
<dbReference type="Gene3D" id="2.40.50.140">
    <property type="entry name" value="Nucleic acid-binding proteins"/>
    <property type="match status" value="1"/>
</dbReference>
<dbReference type="HAMAP" id="MF_00407">
    <property type="entry name" value="DNA_ligase"/>
    <property type="match status" value="1"/>
</dbReference>
<dbReference type="InterPro" id="IPR050191">
    <property type="entry name" value="ATP-dep_DNA_ligase"/>
</dbReference>
<dbReference type="InterPro" id="IPR022865">
    <property type="entry name" value="DNA_ligae_ATP-dep_bac/arc"/>
</dbReference>
<dbReference type="InterPro" id="IPR000977">
    <property type="entry name" value="DNA_ligase_ATP-dep"/>
</dbReference>
<dbReference type="InterPro" id="IPR012309">
    <property type="entry name" value="DNA_ligase_ATP-dep_C"/>
</dbReference>
<dbReference type="InterPro" id="IPR012310">
    <property type="entry name" value="DNA_ligase_ATP-dep_cent"/>
</dbReference>
<dbReference type="InterPro" id="IPR016059">
    <property type="entry name" value="DNA_ligase_ATP-dep_CS"/>
</dbReference>
<dbReference type="InterPro" id="IPR012308">
    <property type="entry name" value="DNA_ligase_ATP-dep_N"/>
</dbReference>
<dbReference type="InterPro" id="IPR036599">
    <property type="entry name" value="DNA_ligase_N_sf"/>
</dbReference>
<dbReference type="InterPro" id="IPR012340">
    <property type="entry name" value="NA-bd_OB-fold"/>
</dbReference>
<dbReference type="NCBIfam" id="TIGR00574">
    <property type="entry name" value="dnl1"/>
    <property type="match status" value="1"/>
</dbReference>
<dbReference type="NCBIfam" id="NF002868">
    <property type="entry name" value="PRK03180.1"/>
    <property type="match status" value="1"/>
</dbReference>
<dbReference type="PANTHER" id="PTHR45674">
    <property type="entry name" value="DNA LIGASE 1/3 FAMILY MEMBER"/>
    <property type="match status" value="1"/>
</dbReference>
<dbReference type="PANTHER" id="PTHR45674:SF13">
    <property type="entry name" value="DNA LIGASE-RELATED"/>
    <property type="match status" value="1"/>
</dbReference>
<dbReference type="Pfam" id="PF04679">
    <property type="entry name" value="DNA_ligase_A_C"/>
    <property type="match status" value="1"/>
</dbReference>
<dbReference type="Pfam" id="PF01068">
    <property type="entry name" value="DNA_ligase_A_M"/>
    <property type="match status" value="1"/>
</dbReference>
<dbReference type="Pfam" id="PF04675">
    <property type="entry name" value="DNA_ligase_A_N"/>
    <property type="match status" value="1"/>
</dbReference>
<dbReference type="SUPFAM" id="SSF117018">
    <property type="entry name" value="ATP-dependent DNA ligase DNA-binding domain"/>
    <property type="match status" value="1"/>
</dbReference>
<dbReference type="SUPFAM" id="SSF56091">
    <property type="entry name" value="DNA ligase/mRNA capping enzyme, catalytic domain"/>
    <property type="match status" value="1"/>
</dbReference>
<dbReference type="SUPFAM" id="SSF50249">
    <property type="entry name" value="Nucleic acid-binding proteins"/>
    <property type="match status" value="1"/>
</dbReference>
<dbReference type="PROSITE" id="PS00697">
    <property type="entry name" value="DNA_LIGASE_A1"/>
    <property type="match status" value="1"/>
</dbReference>
<dbReference type="PROSITE" id="PS00333">
    <property type="entry name" value="DNA_LIGASE_A2"/>
    <property type="match status" value="1"/>
</dbReference>
<dbReference type="PROSITE" id="PS50160">
    <property type="entry name" value="DNA_LIGASE_A3"/>
    <property type="match status" value="1"/>
</dbReference>
<feature type="chain" id="PRO_0000365226" description="Probable DNA ligase">
    <location>
        <begin position="1"/>
        <end position="519"/>
    </location>
</feature>
<feature type="active site" description="N6-AMP-lysine intermediate" evidence="1">
    <location>
        <position position="223"/>
    </location>
</feature>
<feature type="binding site" evidence="1">
    <location>
        <position position="221"/>
    </location>
    <ligand>
        <name>ATP</name>
        <dbReference type="ChEBI" id="CHEBI:30616"/>
    </ligand>
</feature>
<feature type="binding site" evidence="1">
    <location>
        <position position="228"/>
    </location>
    <ligand>
        <name>ATP</name>
        <dbReference type="ChEBI" id="CHEBI:30616"/>
    </ligand>
</feature>
<feature type="binding site" evidence="1">
    <location>
        <position position="243"/>
    </location>
    <ligand>
        <name>ATP</name>
        <dbReference type="ChEBI" id="CHEBI:30616"/>
    </ligand>
</feature>
<feature type="binding site" evidence="1">
    <location>
        <position position="272"/>
    </location>
    <ligand>
        <name>ATP</name>
        <dbReference type="ChEBI" id="CHEBI:30616"/>
    </ligand>
</feature>
<feature type="binding site" evidence="1">
    <location>
        <position position="312"/>
    </location>
    <ligand>
        <name>ATP</name>
        <dbReference type="ChEBI" id="CHEBI:30616"/>
    </ligand>
</feature>
<feature type="binding site" evidence="1">
    <location>
        <position position="384"/>
    </location>
    <ligand>
        <name>ATP</name>
        <dbReference type="ChEBI" id="CHEBI:30616"/>
    </ligand>
</feature>
<feature type="binding site" evidence="1">
    <location>
        <position position="390"/>
    </location>
    <ligand>
        <name>ATP</name>
        <dbReference type="ChEBI" id="CHEBI:30616"/>
    </ligand>
</feature>
<name>DNLI_MYCPA</name>
<organism>
    <name type="scientific">Mycolicibacterium paratuberculosis (strain ATCC BAA-968 / K-10)</name>
    <name type="common">Mycobacterium paratuberculosis</name>
    <dbReference type="NCBI Taxonomy" id="262316"/>
    <lineage>
        <taxon>Bacteria</taxon>
        <taxon>Bacillati</taxon>
        <taxon>Actinomycetota</taxon>
        <taxon>Actinomycetes</taxon>
        <taxon>Mycobacteriales</taxon>
        <taxon>Mycobacteriaceae</taxon>
        <taxon>Mycobacterium</taxon>
        <taxon>Mycobacterium avium complex (MAC)</taxon>
    </lineage>
</organism>
<reference key="1">
    <citation type="journal article" date="2005" name="Proc. Natl. Acad. Sci. U.S.A.">
        <title>The complete genome sequence of Mycobacterium avium subspecies paratuberculosis.</title>
        <authorList>
            <person name="Li L."/>
            <person name="Bannantine J.P."/>
            <person name="Zhang Q."/>
            <person name="Amonsin A."/>
            <person name="May B.J."/>
            <person name="Alt D."/>
            <person name="Banerji N."/>
            <person name="Kanjilal S."/>
            <person name="Kapur V."/>
        </authorList>
    </citation>
    <scope>NUCLEOTIDE SEQUENCE [LARGE SCALE GENOMIC DNA]</scope>
    <source>
        <strain>ATCC BAA-968 / K-10</strain>
    </source>
</reference>
<evidence type="ECO:0000255" key="1">
    <source>
        <dbReference type="HAMAP-Rule" id="MF_00407"/>
    </source>
</evidence>
<accession>Q73V97</accession>
<sequence length="519" mass="54125">MSPSHAKLATVLLFDVATASADVGGTPSRLTKVARIADLLRRAAPNAALVAIVVSWLSGELRQRQIGVGWAALRSRPPAAAHPTLTVVAVDAAFAEIGAVAGKGAQARRAALLNALFAAATETEQTFLLRLLGGELRQGALAGIMADAVARAAGIPAAAVQRAAMLGGDLPAVAAAALSGEASALDAFTLRVGRPVAPMLAQTAAGVAQAIERHGGQAIFEAKLDGARVQIHRAGDQVTVYTRSLDDVTARLPEVVTATLALPVEALIADGEAIALRPDNSPQRFQVTASRFGRSLDVAAAVAAQPLSVFIFDILHCDGIDLLDAPTTDRLAALDALVPPAQRVDRLLTADPDAAGRFLEATLAAGHEGVMAKAPGAPYQAGRRGAGWLKVKPVHTLDLVVLAVEWGSGRRRGKLSNIHLGARDPATGEFVMVGKTFKGMTDAMLDWQTARFTELAVGGTDGYVVRVRPEQVVEVAVDGVQKSSRYPGGLALRFARVLRYRDDKGPAEADTIDAVRALY</sequence>
<gene>
    <name evidence="1" type="primary">lig</name>
    <name type="ordered locus">MAP_3117</name>
</gene>
<protein>
    <recommendedName>
        <fullName evidence="1">Probable DNA ligase</fullName>
        <ecNumber evidence="1">6.5.1.1</ecNumber>
    </recommendedName>
    <alternativeName>
        <fullName evidence="1">Polydeoxyribonucleotide synthase [ATP]</fullName>
    </alternativeName>
</protein>
<comment type="function">
    <text evidence="1">DNA ligase that seals nicks in double-stranded DNA during DNA replication, DNA recombination and DNA repair.</text>
</comment>
<comment type="catalytic activity">
    <reaction evidence="1">
        <text>ATP + (deoxyribonucleotide)n-3'-hydroxyl + 5'-phospho-(deoxyribonucleotide)m = (deoxyribonucleotide)n+m + AMP + diphosphate.</text>
        <dbReference type="EC" id="6.5.1.1"/>
    </reaction>
</comment>
<comment type="cofactor">
    <cofactor evidence="1">
        <name>Mg(2+)</name>
        <dbReference type="ChEBI" id="CHEBI:18420"/>
    </cofactor>
</comment>
<comment type="similarity">
    <text evidence="1">Belongs to the ATP-dependent DNA ligase family.</text>
</comment>